<feature type="chain" id="PRO_0000205693" description="Tropomyosin-2">
    <location>
        <begin position="1"/>
        <end position="161"/>
    </location>
</feature>
<feature type="region of interest" description="Disordered" evidence="2">
    <location>
        <begin position="32"/>
        <end position="97"/>
    </location>
</feature>
<feature type="coiled-coil region" evidence="1">
    <location>
        <begin position="1"/>
        <end position="161"/>
    </location>
</feature>
<feature type="compositionally biased region" description="Basic and acidic residues" evidence="2">
    <location>
        <begin position="32"/>
        <end position="43"/>
    </location>
</feature>
<feature type="compositionally biased region" description="Polar residues" evidence="2">
    <location>
        <begin position="62"/>
        <end position="83"/>
    </location>
</feature>
<feature type="modified residue" description="Phosphoserine" evidence="5 6">
    <location>
        <position position="55"/>
    </location>
</feature>
<feature type="modified residue" description="Phosphoserine" evidence="5">
    <location>
        <position position="116"/>
    </location>
</feature>
<feature type="modified residue" description="Phosphoserine" evidence="5 6">
    <location>
        <position position="157"/>
    </location>
</feature>
<protein>
    <recommendedName>
        <fullName>Tropomyosin-2</fullName>
    </recommendedName>
</protein>
<keyword id="KW-0175">Coiled coil</keyword>
<keyword id="KW-0963">Cytoplasm</keyword>
<keyword id="KW-0206">Cytoskeleton</keyword>
<keyword id="KW-0597">Phosphoprotein</keyword>
<keyword id="KW-1185">Reference proteome</keyword>
<keyword id="KW-0677">Repeat</keyword>
<comment type="function">
    <text evidence="4">Involved in cell morphogenesis. Binds to F-actin and stabilizes the actin filaments.</text>
</comment>
<comment type="subunit">
    <text evidence="4">Homodimer.</text>
</comment>
<comment type="subcellular location">
    <subcellularLocation>
        <location>Cytoplasm</location>
        <location>Cytoskeleton</location>
    </subcellularLocation>
</comment>
<comment type="domain">
    <text>The molecule is in a coiled coil structure that is formed by 2 polypeptide chains. The sequence exhibits a prominent seven-residues periodicity.</text>
</comment>
<comment type="miscellaneous">
    <text evidence="3">Present with 11100 molecules/cell in log phase SD medium.</text>
</comment>
<proteinExistence type="evidence at protein level"/>
<evidence type="ECO:0000250" key="1"/>
<evidence type="ECO:0000256" key="2">
    <source>
        <dbReference type="SAM" id="MobiDB-lite"/>
    </source>
</evidence>
<evidence type="ECO:0000269" key="3">
    <source>
    </source>
</evidence>
<evidence type="ECO:0000269" key="4">
    <source>
    </source>
</evidence>
<evidence type="ECO:0007744" key="5">
    <source>
    </source>
</evidence>
<evidence type="ECO:0007744" key="6">
    <source>
    </source>
</evidence>
<dbReference type="EMBL" id="Z38059">
    <property type="protein sequence ID" value="CAA86140.1"/>
    <property type="molecule type" value="Genomic_DNA"/>
</dbReference>
<dbReference type="EMBL" id="AY558235">
    <property type="protein sequence ID" value="AAS56561.1"/>
    <property type="molecule type" value="Genomic_DNA"/>
</dbReference>
<dbReference type="EMBL" id="BK006942">
    <property type="protein sequence ID" value="DAA08414.1"/>
    <property type="molecule type" value="Genomic_DNA"/>
</dbReference>
<dbReference type="PIR" id="S48396">
    <property type="entry name" value="S48396"/>
</dbReference>
<dbReference type="RefSeq" id="NP_012128.3">
    <property type="nucleotide sequence ID" value="NM_001179486.3"/>
</dbReference>
<dbReference type="SMR" id="P40414"/>
<dbReference type="BioGRID" id="34853">
    <property type="interactions" value="77"/>
</dbReference>
<dbReference type="DIP" id="DIP-2201N"/>
<dbReference type="FunCoup" id="P40414">
    <property type="interactions" value="68"/>
</dbReference>
<dbReference type="IntAct" id="P40414">
    <property type="interactions" value="5"/>
</dbReference>
<dbReference type="MINT" id="P40414"/>
<dbReference type="STRING" id="4932.YIL138C"/>
<dbReference type="iPTMnet" id="P40414"/>
<dbReference type="PaxDb" id="4932-YIL138C"/>
<dbReference type="PeptideAtlas" id="P40414"/>
<dbReference type="EnsemblFungi" id="YIL138C_mRNA">
    <property type="protein sequence ID" value="YIL138C"/>
    <property type="gene ID" value="YIL138C"/>
</dbReference>
<dbReference type="GeneID" id="854668"/>
<dbReference type="KEGG" id="sce:YIL138C"/>
<dbReference type="AGR" id="SGD:S000001400"/>
<dbReference type="SGD" id="S000001400">
    <property type="gene designation" value="TPM2"/>
</dbReference>
<dbReference type="VEuPathDB" id="FungiDB:YIL138C"/>
<dbReference type="eggNOG" id="KOG1003">
    <property type="taxonomic scope" value="Eukaryota"/>
</dbReference>
<dbReference type="GeneTree" id="ENSGT00940000176442"/>
<dbReference type="HOGENOM" id="CLU_104738_1_1_1"/>
<dbReference type="InParanoid" id="P40414"/>
<dbReference type="OMA" id="EHRADEN"/>
<dbReference type="OrthoDB" id="128924at2759"/>
<dbReference type="BioCyc" id="YEAST:G3O-31389-MONOMER"/>
<dbReference type="BioGRID-ORCS" id="854668">
    <property type="hits" value="3 hits in 10 CRISPR screens"/>
</dbReference>
<dbReference type="PRO" id="PR:P40414"/>
<dbReference type="Proteomes" id="UP000002311">
    <property type="component" value="Chromosome IX"/>
</dbReference>
<dbReference type="RNAct" id="P40414">
    <property type="molecule type" value="protein"/>
</dbReference>
<dbReference type="GO" id="GO:0005884">
    <property type="term" value="C:actin filament"/>
    <property type="evidence" value="ECO:0000314"/>
    <property type="project" value="UniProtKB"/>
</dbReference>
<dbReference type="GO" id="GO:0032432">
    <property type="term" value="C:actin filament bundle"/>
    <property type="evidence" value="ECO:0000314"/>
    <property type="project" value="SGD"/>
</dbReference>
<dbReference type="GO" id="GO:0005826">
    <property type="term" value="C:actomyosin contractile ring"/>
    <property type="evidence" value="ECO:0000318"/>
    <property type="project" value="GO_Central"/>
</dbReference>
<dbReference type="GO" id="GO:0000142">
    <property type="term" value="C:cellular bud neck contractile ring"/>
    <property type="evidence" value="ECO:0000314"/>
    <property type="project" value="SGD"/>
</dbReference>
<dbReference type="GO" id="GO:0051015">
    <property type="term" value="F:actin filament binding"/>
    <property type="evidence" value="ECO:0000314"/>
    <property type="project" value="UniProtKB"/>
</dbReference>
<dbReference type="GO" id="GO:0003786">
    <property type="term" value="F:actin lateral binding"/>
    <property type="evidence" value="ECO:0000314"/>
    <property type="project" value="SGD"/>
</dbReference>
<dbReference type="GO" id="GO:0042803">
    <property type="term" value="F:protein homodimerization activity"/>
    <property type="evidence" value="ECO:0000314"/>
    <property type="project" value="UniProtKB"/>
</dbReference>
<dbReference type="GO" id="GO:0051017">
    <property type="term" value="P:actin filament bundle assembly"/>
    <property type="evidence" value="ECO:0000316"/>
    <property type="project" value="SGD"/>
</dbReference>
<dbReference type="GO" id="GO:0007015">
    <property type="term" value="P:actin filament organization"/>
    <property type="evidence" value="ECO:0000318"/>
    <property type="project" value="GO_Central"/>
</dbReference>
<dbReference type="GO" id="GO:0000282">
    <property type="term" value="P:cellular bud site selection"/>
    <property type="evidence" value="ECO:0000315"/>
    <property type="project" value="SGD"/>
</dbReference>
<dbReference type="GO" id="GO:1903475">
    <property type="term" value="P:mitotic actomyosin contractile ring assembly"/>
    <property type="evidence" value="ECO:0000316"/>
    <property type="project" value="SGD"/>
</dbReference>
<dbReference type="GO" id="GO:0000281">
    <property type="term" value="P:mitotic cytokinesis"/>
    <property type="evidence" value="ECO:0000318"/>
    <property type="project" value="GO_Central"/>
</dbReference>
<dbReference type="FunFam" id="1.20.5.340:FF:000001">
    <property type="entry name" value="Tropomyosin alpha-1 chain isoform 2"/>
    <property type="match status" value="1"/>
</dbReference>
<dbReference type="Gene3D" id="1.10.287.1490">
    <property type="match status" value="1"/>
</dbReference>
<dbReference type="InterPro" id="IPR000533">
    <property type="entry name" value="Tropomyosin"/>
</dbReference>
<dbReference type="PANTHER" id="PTHR19269">
    <property type="entry name" value="TROPOMYOSIN"/>
    <property type="match status" value="1"/>
</dbReference>
<dbReference type="Pfam" id="PF00261">
    <property type="entry name" value="Tropomyosin"/>
    <property type="match status" value="1"/>
</dbReference>
<dbReference type="SUPFAM" id="SSF57997">
    <property type="entry name" value="Tropomyosin"/>
    <property type="match status" value="1"/>
</dbReference>
<accession>P40414</accession>
<accession>D6VVE8</accession>
<organism>
    <name type="scientific">Saccharomyces cerevisiae (strain ATCC 204508 / S288c)</name>
    <name type="common">Baker's yeast</name>
    <dbReference type="NCBI Taxonomy" id="559292"/>
    <lineage>
        <taxon>Eukaryota</taxon>
        <taxon>Fungi</taxon>
        <taxon>Dikarya</taxon>
        <taxon>Ascomycota</taxon>
        <taxon>Saccharomycotina</taxon>
        <taxon>Saccharomycetes</taxon>
        <taxon>Saccharomycetales</taxon>
        <taxon>Saccharomycetaceae</taxon>
        <taxon>Saccharomyces</taxon>
    </lineage>
</organism>
<name>TPM2_YEAST</name>
<reference key="1">
    <citation type="journal article" date="1997" name="Nature">
        <title>The nucleotide sequence of Saccharomyces cerevisiae chromosome IX.</title>
        <authorList>
            <person name="Churcher C.M."/>
            <person name="Bowman S."/>
            <person name="Badcock K."/>
            <person name="Bankier A.T."/>
            <person name="Brown D."/>
            <person name="Chillingworth T."/>
            <person name="Connor R."/>
            <person name="Devlin K."/>
            <person name="Gentles S."/>
            <person name="Hamlin N."/>
            <person name="Harris D.E."/>
            <person name="Horsnell T."/>
            <person name="Hunt S."/>
            <person name="Jagels K."/>
            <person name="Jones M."/>
            <person name="Lye G."/>
            <person name="Moule S."/>
            <person name="Odell C."/>
            <person name="Pearson D."/>
            <person name="Rajandream M.A."/>
            <person name="Rice P."/>
            <person name="Rowley N."/>
            <person name="Skelton J."/>
            <person name="Smith V."/>
            <person name="Walsh S.V."/>
            <person name="Whitehead S."/>
            <person name="Barrell B.G."/>
        </authorList>
    </citation>
    <scope>NUCLEOTIDE SEQUENCE [LARGE SCALE GENOMIC DNA]</scope>
    <source>
        <strain>ATCC 204508 / S288c</strain>
    </source>
</reference>
<reference key="2">
    <citation type="journal article" date="2014" name="G3 (Bethesda)">
        <title>The reference genome sequence of Saccharomyces cerevisiae: Then and now.</title>
        <authorList>
            <person name="Engel S.R."/>
            <person name="Dietrich F.S."/>
            <person name="Fisk D.G."/>
            <person name="Binkley G."/>
            <person name="Balakrishnan R."/>
            <person name="Costanzo M.C."/>
            <person name="Dwight S.S."/>
            <person name="Hitz B.C."/>
            <person name="Karra K."/>
            <person name="Nash R.S."/>
            <person name="Weng S."/>
            <person name="Wong E.D."/>
            <person name="Lloyd P."/>
            <person name="Skrzypek M.S."/>
            <person name="Miyasato S.R."/>
            <person name="Simison M."/>
            <person name="Cherry J.M."/>
        </authorList>
    </citation>
    <scope>GENOME REANNOTATION</scope>
    <source>
        <strain>ATCC 204508 / S288c</strain>
    </source>
</reference>
<reference key="3">
    <citation type="journal article" date="2007" name="Genome Res.">
        <title>Approaching a complete repository of sequence-verified protein-encoding clones for Saccharomyces cerevisiae.</title>
        <authorList>
            <person name="Hu Y."/>
            <person name="Rolfs A."/>
            <person name="Bhullar B."/>
            <person name="Murthy T.V.S."/>
            <person name="Zhu C."/>
            <person name="Berger M.F."/>
            <person name="Camargo A.A."/>
            <person name="Kelley F."/>
            <person name="McCarron S."/>
            <person name="Jepson D."/>
            <person name="Richardson A."/>
            <person name="Raphael J."/>
            <person name="Moreira D."/>
            <person name="Taycher E."/>
            <person name="Zuo D."/>
            <person name="Mohr S."/>
            <person name="Kane M.F."/>
            <person name="Williamson J."/>
            <person name="Simpson A.J.G."/>
            <person name="Bulyk M.L."/>
            <person name="Harlow E."/>
            <person name="Marsischky G."/>
            <person name="Kolodner R.D."/>
            <person name="LaBaer J."/>
        </authorList>
    </citation>
    <scope>NUCLEOTIDE SEQUENCE [GENOMIC DNA]</scope>
    <source>
        <strain>ATCC 204508 / S288c</strain>
    </source>
</reference>
<reference key="4">
    <citation type="journal article" date="1995" name="J. Cell Biol.">
        <title>Tropomyosin is essential in yeast, yet the TPM1 and TPM2 products perform distinct functions.</title>
        <authorList>
            <person name="Drees B."/>
            <person name="Brown C."/>
            <person name="Barrell B.G."/>
            <person name="Bretscher A."/>
        </authorList>
    </citation>
    <scope>FUNCTION</scope>
    <scope>SUBUNIT</scope>
</reference>
<reference key="5">
    <citation type="journal article" date="2003" name="Nature">
        <title>Global analysis of protein expression in yeast.</title>
        <authorList>
            <person name="Ghaemmaghami S."/>
            <person name="Huh W.-K."/>
            <person name="Bower K."/>
            <person name="Howson R.W."/>
            <person name="Belle A."/>
            <person name="Dephoure N."/>
            <person name="O'Shea E.K."/>
            <person name="Weissman J.S."/>
        </authorList>
    </citation>
    <scope>LEVEL OF PROTEIN EXPRESSION [LARGE SCALE ANALYSIS]</scope>
</reference>
<reference key="6">
    <citation type="journal article" date="2008" name="Mol. Cell. Proteomics">
        <title>A multidimensional chromatography technology for in-depth phosphoproteome analysis.</title>
        <authorList>
            <person name="Albuquerque C.P."/>
            <person name="Smolka M.B."/>
            <person name="Payne S.H."/>
            <person name="Bafna V."/>
            <person name="Eng J."/>
            <person name="Zhou H."/>
        </authorList>
    </citation>
    <scope>PHOSPHORYLATION [LARGE SCALE ANALYSIS] AT SER-55; SER-116 AND SER-157</scope>
    <scope>IDENTIFICATION BY MASS SPECTROMETRY [LARGE SCALE ANALYSIS]</scope>
</reference>
<reference key="7">
    <citation type="journal article" date="2009" name="Science">
        <title>Global analysis of Cdk1 substrate phosphorylation sites provides insights into evolution.</title>
        <authorList>
            <person name="Holt L.J."/>
            <person name="Tuch B.B."/>
            <person name="Villen J."/>
            <person name="Johnson A.D."/>
            <person name="Gygi S.P."/>
            <person name="Morgan D.O."/>
        </authorList>
    </citation>
    <scope>PHOSPHORYLATION [LARGE SCALE ANALYSIS] AT SER-55 AND SER-157</scope>
    <scope>IDENTIFICATION BY MASS SPECTROMETRY [LARGE SCALE ANALYSIS]</scope>
</reference>
<gene>
    <name type="primary">TPM2</name>
    <name type="ordered locus">YIL138C</name>
</gene>
<sequence length="161" mass="19093">MEKIKEKLNSLKLESESWQEKYEELREQLKELEQSNTEKENEIKSLSAKNEQLDSEVEKLESQLSDTKQLAEDSNNLRSNNENYTKKNQDLEQQLEDSEAKLKEAMDKLKEADLNSEQMGRRIVALEEERDEWEKKCEEFQSKYEEAQKELDEIANSLENL</sequence>